<protein>
    <recommendedName>
        <fullName evidence="1">Small ribosomal subunit protein uS8</fullName>
    </recommendedName>
    <alternativeName>
        <fullName evidence="2">30S ribosomal protein S8</fullName>
    </alternativeName>
</protein>
<sequence length="132" mass="14483">MTMTDPLGDMITRIRNAQLRGKGKVVTPASKLRGWVLDVLAEEGFIRGYARVEYPGGKSDFEIELKYNEGAPVIQMIERVSTPGRRVYSSVKTMPTVHNGLGISILSTPKGIMSDVAAREQNVGGEVLCRVF</sequence>
<proteinExistence type="inferred from homology"/>
<accession>A7HWS5</accession>
<keyword id="KW-1185">Reference proteome</keyword>
<keyword id="KW-0687">Ribonucleoprotein</keyword>
<keyword id="KW-0689">Ribosomal protein</keyword>
<keyword id="KW-0694">RNA-binding</keyword>
<keyword id="KW-0699">rRNA-binding</keyword>
<organism>
    <name type="scientific">Parvibaculum lavamentivorans (strain DS-1 / DSM 13023 / NCIMB 13966)</name>
    <dbReference type="NCBI Taxonomy" id="402881"/>
    <lineage>
        <taxon>Bacteria</taxon>
        <taxon>Pseudomonadati</taxon>
        <taxon>Pseudomonadota</taxon>
        <taxon>Alphaproteobacteria</taxon>
        <taxon>Hyphomicrobiales</taxon>
        <taxon>Parvibaculaceae</taxon>
        <taxon>Parvibaculum</taxon>
    </lineage>
</organism>
<dbReference type="EMBL" id="CP000774">
    <property type="protein sequence ID" value="ABS64358.1"/>
    <property type="molecule type" value="Genomic_DNA"/>
</dbReference>
<dbReference type="RefSeq" id="WP_012111672.1">
    <property type="nucleotide sequence ID" value="NC_009719.1"/>
</dbReference>
<dbReference type="SMR" id="A7HWS5"/>
<dbReference type="STRING" id="402881.Plav_2750"/>
<dbReference type="KEGG" id="pla:Plav_2750"/>
<dbReference type="eggNOG" id="COG0096">
    <property type="taxonomic scope" value="Bacteria"/>
</dbReference>
<dbReference type="HOGENOM" id="CLU_098428_0_0_5"/>
<dbReference type="OrthoDB" id="9802617at2"/>
<dbReference type="Proteomes" id="UP000006377">
    <property type="component" value="Chromosome"/>
</dbReference>
<dbReference type="GO" id="GO:1990904">
    <property type="term" value="C:ribonucleoprotein complex"/>
    <property type="evidence" value="ECO:0007669"/>
    <property type="project" value="UniProtKB-KW"/>
</dbReference>
<dbReference type="GO" id="GO:0005840">
    <property type="term" value="C:ribosome"/>
    <property type="evidence" value="ECO:0007669"/>
    <property type="project" value="UniProtKB-KW"/>
</dbReference>
<dbReference type="GO" id="GO:0019843">
    <property type="term" value="F:rRNA binding"/>
    <property type="evidence" value="ECO:0007669"/>
    <property type="project" value="UniProtKB-UniRule"/>
</dbReference>
<dbReference type="GO" id="GO:0003735">
    <property type="term" value="F:structural constituent of ribosome"/>
    <property type="evidence" value="ECO:0007669"/>
    <property type="project" value="InterPro"/>
</dbReference>
<dbReference type="GO" id="GO:0006412">
    <property type="term" value="P:translation"/>
    <property type="evidence" value="ECO:0007669"/>
    <property type="project" value="UniProtKB-UniRule"/>
</dbReference>
<dbReference type="FunFam" id="3.30.1490.10:FF:000001">
    <property type="entry name" value="30S ribosomal protein S8"/>
    <property type="match status" value="1"/>
</dbReference>
<dbReference type="Gene3D" id="3.30.1370.30">
    <property type="match status" value="1"/>
</dbReference>
<dbReference type="Gene3D" id="3.30.1490.10">
    <property type="match status" value="1"/>
</dbReference>
<dbReference type="HAMAP" id="MF_01302_B">
    <property type="entry name" value="Ribosomal_uS8_B"/>
    <property type="match status" value="1"/>
</dbReference>
<dbReference type="InterPro" id="IPR000630">
    <property type="entry name" value="Ribosomal_uS8"/>
</dbReference>
<dbReference type="InterPro" id="IPR047863">
    <property type="entry name" value="Ribosomal_uS8_CS"/>
</dbReference>
<dbReference type="InterPro" id="IPR035987">
    <property type="entry name" value="Ribosomal_uS8_sf"/>
</dbReference>
<dbReference type="NCBIfam" id="NF001109">
    <property type="entry name" value="PRK00136.1"/>
    <property type="match status" value="1"/>
</dbReference>
<dbReference type="PANTHER" id="PTHR11758">
    <property type="entry name" value="40S RIBOSOMAL PROTEIN S15A"/>
    <property type="match status" value="1"/>
</dbReference>
<dbReference type="Pfam" id="PF00410">
    <property type="entry name" value="Ribosomal_S8"/>
    <property type="match status" value="1"/>
</dbReference>
<dbReference type="SUPFAM" id="SSF56047">
    <property type="entry name" value="Ribosomal protein S8"/>
    <property type="match status" value="1"/>
</dbReference>
<dbReference type="PROSITE" id="PS00053">
    <property type="entry name" value="RIBOSOMAL_S8"/>
    <property type="match status" value="1"/>
</dbReference>
<name>RS8_PARL1</name>
<gene>
    <name evidence="1" type="primary">rpsH</name>
    <name type="ordered locus">Plav_2750</name>
</gene>
<feature type="chain" id="PRO_1000073195" description="Small ribosomal subunit protein uS8">
    <location>
        <begin position="1"/>
        <end position="132"/>
    </location>
</feature>
<evidence type="ECO:0000255" key="1">
    <source>
        <dbReference type="HAMAP-Rule" id="MF_01302"/>
    </source>
</evidence>
<evidence type="ECO:0000305" key="2"/>
<reference key="1">
    <citation type="journal article" date="2011" name="Stand. Genomic Sci.">
        <title>Complete genome sequence of Parvibaculum lavamentivorans type strain (DS-1(T)).</title>
        <authorList>
            <person name="Schleheck D."/>
            <person name="Weiss M."/>
            <person name="Pitluck S."/>
            <person name="Bruce D."/>
            <person name="Land M.L."/>
            <person name="Han S."/>
            <person name="Saunders E."/>
            <person name="Tapia R."/>
            <person name="Detter C."/>
            <person name="Brettin T."/>
            <person name="Han J."/>
            <person name="Woyke T."/>
            <person name="Goodwin L."/>
            <person name="Pennacchio L."/>
            <person name="Nolan M."/>
            <person name="Cook A.M."/>
            <person name="Kjelleberg S."/>
            <person name="Thomas T."/>
        </authorList>
    </citation>
    <scope>NUCLEOTIDE SEQUENCE [LARGE SCALE GENOMIC DNA]</scope>
    <source>
        <strain>DS-1 / DSM 13023 / NCIMB 13966</strain>
    </source>
</reference>
<comment type="function">
    <text evidence="1">One of the primary rRNA binding proteins, it binds directly to 16S rRNA central domain where it helps coordinate assembly of the platform of the 30S subunit.</text>
</comment>
<comment type="subunit">
    <text evidence="1">Part of the 30S ribosomal subunit. Contacts proteins S5 and S12.</text>
</comment>
<comment type="similarity">
    <text evidence="1">Belongs to the universal ribosomal protein uS8 family.</text>
</comment>